<dbReference type="EMBL" id="BC079186">
    <property type="protein sequence ID" value="AAH79186.1"/>
    <property type="molecule type" value="mRNA"/>
</dbReference>
<dbReference type="RefSeq" id="NP_001007725.1">
    <property type="nucleotide sequence ID" value="NM_001007724.1"/>
</dbReference>
<dbReference type="RefSeq" id="XP_006247594.1">
    <property type="nucleotide sequence ID" value="XM_006247532.5"/>
</dbReference>
<dbReference type="RefSeq" id="XP_008766515.1">
    <property type="nucleotide sequence ID" value="XM_008768293.3"/>
</dbReference>
<dbReference type="RefSeq" id="XP_017452895.1">
    <property type="nucleotide sequence ID" value="XM_017597406.3"/>
</dbReference>
<dbReference type="RefSeq" id="XP_038942344.1">
    <property type="nucleotide sequence ID" value="XM_039086416.2"/>
</dbReference>
<dbReference type="RefSeq" id="XP_063125518.1">
    <property type="nucleotide sequence ID" value="XM_063269448.1"/>
</dbReference>
<dbReference type="RefSeq" id="XP_063125519.1">
    <property type="nucleotide sequence ID" value="XM_063269449.1"/>
</dbReference>
<dbReference type="RefSeq" id="XP_063125521.1">
    <property type="nucleotide sequence ID" value="XM_063269451.1"/>
</dbReference>
<dbReference type="SMR" id="Q6AY55"/>
<dbReference type="FunCoup" id="Q6AY55">
    <property type="interactions" value="1436"/>
</dbReference>
<dbReference type="IntAct" id="Q6AY55">
    <property type="interactions" value="1"/>
</dbReference>
<dbReference type="STRING" id="10116.ENSRNOP00000074921"/>
<dbReference type="PhosphoSitePlus" id="Q6AY55"/>
<dbReference type="jPOST" id="Q6AY55"/>
<dbReference type="PaxDb" id="10116-ENSRNOP00000037891"/>
<dbReference type="Ensembl" id="ENSRNOT00000031498.4">
    <property type="protein sequence ID" value="ENSRNOP00000037891.3"/>
    <property type="gene ID" value="ENSRNOG00000021682.5"/>
</dbReference>
<dbReference type="GeneID" id="360639"/>
<dbReference type="KEGG" id="rno:360639"/>
<dbReference type="UCSC" id="RGD:1359211">
    <property type="organism name" value="rat"/>
</dbReference>
<dbReference type="AGR" id="RGD:1359211"/>
<dbReference type="CTD" id="79877"/>
<dbReference type="RGD" id="1359211">
    <property type="gene designation" value="Dcakd"/>
</dbReference>
<dbReference type="eggNOG" id="KOG3220">
    <property type="taxonomic scope" value="Eukaryota"/>
</dbReference>
<dbReference type="GeneTree" id="ENSGT00550000075038"/>
<dbReference type="InParanoid" id="Q6AY55"/>
<dbReference type="OMA" id="CQMDIEQ"/>
<dbReference type="OrthoDB" id="247245at2759"/>
<dbReference type="PhylomeDB" id="Q6AY55"/>
<dbReference type="TreeFam" id="TF314815"/>
<dbReference type="Reactome" id="R-RNO-196783">
    <property type="pathway name" value="Coenzyme A biosynthesis"/>
</dbReference>
<dbReference type="SABIO-RK" id="Q6AY55"/>
<dbReference type="PRO" id="PR:Q6AY55"/>
<dbReference type="Proteomes" id="UP000002494">
    <property type="component" value="Chromosome 10"/>
</dbReference>
<dbReference type="Bgee" id="ENSRNOG00000021682">
    <property type="expression patterns" value="Expressed in testis and 19 other cell types or tissues"/>
</dbReference>
<dbReference type="GO" id="GO:0005524">
    <property type="term" value="F:ATP binding"/>
    <property type="evidence" value="ECO:0007669"/>
    <property type="project" value="UniProtKB-KW"/>
</dbReference>
<dbReference type="GO" id="GO:0004140">
    <property type="term" value="F:dephospho-CoA kinase activity"/>
    <property type="evidence" value="ECO:0000266"/>
    <property type="project" value="RGD"/>
</dbReference>
<dbReference type="GO" id="GO:0015937">
    <property type="term" value="P:coenzyme A biosynthetic process"/>
    <property type="evidence" value="ECO:0000318"/>
    <property type="project" value="GO_Central"/>
</dbReference>
<dbReference type="CDD" id="cd02022">
    <property type="entry name" value="DPCK"/>
    <property type="match status" value="1"/>
</dbReference>
<dbReference type="FunFam" id="3.40.50.300:FF:000485">
    <property type="entry name" value="Dephospho-CoA kinase CAB5"/>
    <property type="match status" value="1"/>
</dbReference>
<dbReference type="Gene3D" id="3.40.50.300">
    <property type="entry name" value="P-loop containing nucleotide triphosphate hydrolases"/>
    <property type="match status" value="1"/>
</dbReference>
<dbReference type="HAMAP" id="MF_00376">
    <property type="entry name" value="Dephospho_CoA_kinase"/>
    <property type="match status" value="1"/>
</dbReference>
<dbReference type="InterPro" id="IPR001977">
    <property type="entry name" value="Depp_CoAkinase"/>
</dbReference>
<dbReference type="InterPro" id="IPR027417">
    <property type="entry name" value="P-loop_NTPase"/>
</dbReference>
<dbReference type="NCBIfam" id="TIGR00152">
    <property type="entry name" value="dephospho-CoA kinase"/>
    <property type="match status" value="1"/>
</dbReference>
<dbReference type="PANTHER" id="PTHR10695:SF46">
    <property type="entry name" value="BIFUNCTIONAL COENZYME A SYNTHASE-RELATED"/>
    <property type="match status" value="1"/>
</dbReference>
<dbReference type="PANTHER" id="PTHR10695">
    <property type="entry name" value="DEPHOSPHO-COA KINASE-RELATED"/>
    <property type="match status" value="1"/>
</dbReference>
<dbReference type="Pfam" id="PF01121">
    <property type="entry name" value="CoaE"/>
    <property type="match status" value="1"/>
</dbReference>
<dbReference type="SUPFAM" id="SSF52540">
    <property type="entry name" value="P-loop containing nucleoside triphosphate hydrolases"/>
    <property type="match status" value="1"/>
</dbReference>
<dbReference type="PROSITE" id="PS51219">
    <property type="entry name" value="DPCK"/>
    <property type="match status" value="1"/>
</dbReference>
<gene>
    <name type="primary">Dcakd</name>
</gene>
<sequence>MFLVGLTGGIASGKSSVIQVFQQLGCAVIDVDVIARHIVQPGCPAHRRIVEAFGTEVLLENGDINRKVLGDLIFNQPDRRQLLNSITHPEIRKEMMKETFKYFLRGYRYVILDIPLLFETKKLLKYMKHTVVVYCDRDTQLARLMKRNNLNREDAEARINSQLPLKDKARMANHVLDNSGEWSLTRRQVILLHAKLERSMEYLPLRLGFLTGLAGIASLLYLLTRYLLPSPQLGNPGSKP</sequence>
<reference key="1">
    <citation type="journal article" date="2004" name="Genome Res.">
        <title>The status, quality, and expansion of the NIH full-length cDNA project: the Mammalian Gene Collection (MGC).</title>
        <authorList>
            <consortium name="The MGC Project Team"/>
        </authorList>
    </citation>
    <scope>NUCLEOTIDE SEQUENCE [LARGE SCALE MRNA]</scope>
    <source>
        <tissue>Testis</tissue>
    </source>
</reference>
<proteinExistence type="evidence at transcript level"/>
<keyword id="KW-0067">ATP-binding</keyword>
<keyword id="KW-0547">Nucleotide-binding</keyword>
<keyword id="KW-1185">Reference proteome</keyword>
<accession>Q6AY55</accession>
<name>DCAKD_RAT</name>
<organism>
    <name type="scientific">Rattus norvegicus</name>
    <name type="common">Rat</name>
    <dbReference type="NCBI Taxonomy" id="10116"/>
    <lineage>
        <taxon>Eukaryota</taxon>
        <taxon>Metazoa</taxon>
        <taxon>Chordata</taxon>
        <taxon>Craniata</taxon>
        <taxon>Vertebrata</taxon>
        <taxon>Euteleostomi</taxon>
        <taxon>Mammalia</taxon>
        <taxon>Eutheria</taxon>
        <taxon>Euarchontoglires</taxon>
        <taxon>Glires</taxon>
        <taxon>Rodentia</taxon>
        <taxon>Myomorpha</taxon>
        <taxon>Muroidea</taxon>
        <taxon>Muridae</taxon>
        <taxon>Murinae</taxon>
        <taxon>Rattus</taxon>
    </lineage>
</organism>
<evidence type="ECO:0000255" key="1"/>
<evidence type="ECO:0000305" key="2"/>
<feature type="chain" id="PRO_0000316851" description="Dephospho-CoA kinase domain-containing protein">
    <location>
        <begin position="1"/>
        <end position="240"/>
    </location>
</feature>
<feature type="domain" description="DPCK">
    <location>
        <begin position="3"/>
        <end position="207"/>
    </location>
</feature>
<feature type="binding site" evidence="1">
    <location>
        <begin position="8"/>
        <end position="15"/>
    </location>
    <ligand>
        <name>ATP</name>
        <dbReference type="ChEBI" id="CHEBI:30616"/>
    </ligand>
</feature>
<protein>
    <recommendedName>
        <fullName>Dephospho-CoA kinase domain-containing protein</fullName>
    </recommendedName>
</protein>
<comment type="similarity">
    <text evidence="2">Belongs to the CoaE family.</text>
</comment>